<sequence>MTENLTVQPERLGVLASHHDNAAVDASSGVEAAAGLGESVAITHGPYCSQFNDTLNVYLTAHNALGSSLHTAGVDLAKSLRIAAKIYSEADEAWRKAIDGLFT</sequence>
<comment type="function">
    <text evidence="1">Required for ESX-1 function. Required for either stability or expression of EspA.</text>
</comment>
<comment type="subcellular location">
    <subcellularLocation>
        <location evidence="1">Secreted</location>
    </subcellularLocation>
    <text evidence="1">Secreted via the ESX-1 / type VII secretion system (T7SS).</text>
</comment>
<comment type="domain">
    <text evidence="1">The C-terminal region is required for secretion by the ESX-1 system.</text>
</comment>
<comment type="similarity">
    <text evidence="2">Belongs to the EspC family.</text>
</comment>
<keyword id="KW-1185">Reference proteome</keyword>
<keyword id="KW-0964">Secreted</keyword>
<keyword id="KW-0843">Virulence</keyword>
<accession>P9WJD6</accession>
<accession>L0TD21</accession>
<accession>O06268</accession>
<accession>P65087</accession>
<dbReference type="EMBL" id="AE000516">
    <property type="protein sequence ID" value="AAK48076.1"/>
    <property type="molecule type" value="Genomic_DNA"/>
</dbReference>
<dbReference type="PIR" id="H70956">
    <property type="entry name" value="H70956"/>
</dbReference>
<dbReference type="RefSeq" id="WP_003899599.1">
    <property type="nucleotide sequence ID" value="NZ_KK341227.1"/>
</dbReference>
<dbReference type="SMR" id="P9WJD6"/>
<dbReference type="GeneID" id="45427601"/>
<dbReference type="KEGG" id="mtc:MT3717"/>
<dbReference type="PATRIC" id="fig|83331.31.peg.4001"/>
<dbReference type="HOGENOM" id="CLU_177726_0_0_11"/>
<dbReference type="Proteomes" id="UP000001020">
    <property type="component" value="Chromosome"/>
</dbReference>
<dbReference type="GO" id="GO:0005576">
    <property type="term" value="C:extracellular region"/>
    <property type="evidence" value="ECO:0007669"/>
    <property type="project" value="UniProtKB-SubCell"/>
</dbReference>
<dbReference type="GO" id="GO:0009306">
    <property type="term" value="P:protein secretion"/>
    <property type="evidence" value="ECO:0007669"/>
    <property type="project" value="InterPro"/>
</dbReference>
<dbReference type="InterPro" id="IPR022536">
    <property type="entry name" value="EspC"/>
</dbReference>
<dbReference type="Pfam" id="PF10824">
    <property type="entry name" value="T7SS_ESX_EspC"/>
    <property type="match status" value="1"/>
</dbReference>
<proteinExistence type="inferred from homology"/>
<reference key="1">
    <citation type="journal article" date="2002" name="J. Bacteriol.">
        <title>Whole-genome comparison of Mycobacterium tuberculosis clinical and laboratory strains.</title>
        <authorList>
            <person name="Fleischmann R.D."/>
            <person name="Alland D."/>
            <person name="Eisen J.A."/>
            <person name="Carpenter L."/>
            <person name="White O."/>
            <person name="Peterson J.D."/>
            <person name="DeBoy R.T."/>
            <person name="Dodson R.J."/>
            <person name="Gwinn M.L."/>
            <person name="Haft D.H."/>
            <person name="Hickey E.K."/>
            <person name="Kolonay J.F."/>
            <person name="Nelson W.C."/>
            <person name="Umayam L.A."/>
            <person name="Ermolaeva M.D."/>
            <person name="Salzberg S.L."/>
            <person name="Delcher A."/>
            <person name="Utterback T.R."/>
            <person name="Weidman J.F."/>
            <person name="Khouri H.M."/>
            <person name="Gill J."/>
            <person name="Mikula A."/>
            <person name="Bishai W."/>
            <person name="Jacobs W.R. Jr."/>
            <person name="Venter J.C."/>
            <person name="Fraser C.M."/>
        </authorList>
    </citation>
    <scope>NUCLEOTIDE SEQUENCE [LARGE SCALE GENOMIC DNA]</scope>
    <source>
        <strain>CDC 1551 / Oshkosh</strain>
    </source>
</reference>
<protein>
    <recommendedName>
        <fullName evidence="1">ESX-1 secretion-associated protein EspC</fullName>
    </recommendedName>
</protein>
<organism>
    <name type="scientific">Mycobacterium tuberculosis (strain CDC 1551 / Oshkosh)</name>
    <dbReference type="NCBI Taxonomy" id="83331"/>
    <lineage>
        <taxon>Bacteria</taxon>
        <taxon>Bacillati</taxon>
        <taxon>Actinomycetota</taxon>
        <taxon>Actinomycetes</taxon>
        <taxon>Mycobacteriales</taxon>
        <taxon>Mycobacteriaceae</taxon>
        <taxon>Mycobacterium</taxon>
        <taxon>Mycobacterium tuberculosis complex</taxon>
    </lineage>
</organism>
<name>ESPC_MYCTO</name>
<feature type="chain" id="PRO_0000427848" description="ESX-1 secretion-associated protein EspC">
    <location>
        <begin position="1"/>
        <end position="103"/>
    </location>
</feature>
<gene>
    <name evidence="1" type="primary">espC</name>
    <name type="synonym">snm9</name>
    <name type="ordered locus">MT3717</name>
</gene>
<evidence type="ECO:0000250" key="1">
    <source>
        <dbReference type="UniProtKB" id="P9WJD7"/>
    </source>
</evidence>
<evidence type="ECO:0000305" key="2"/>